<accession>B5EZ11</accession>
<gene>
    <name evidence="1" type="primary">viaA</name>
    <name type="ordered locus">SeAg_B4105</name>
</gene>
<name>VIAA_SALA4</name>
<keyword id="KW-0143">Chaperone</keyword>
<keyword id="KW-0963">Cytoplasm</keyword>
<proteinExistence type="inferred from homology"/>
<feature type="chain" id="PRO_1000186156" description="Regulatory protein ViaA">
    <location>
        <begin position="1"/>
        <end position="483"/>
    </location>
</feature>
<organism>
    <name type="scientific">Salmonella agona (strain SL483)</name>
    <dbReference type="NCBI Taxonomy" id="454166"/>
    <lineage>
        <taxon>Bacteria</taxon>
        <taxon>Pseudomonadati</taxon>
        <taxon>Pseudomonadota</taxon>
        <taxon>Gammaproteobacteria</taxon>
        <taxon>Enterobacterales</taxon>
        <taxon>Enterobacteriaceae</taxon>
        <taxon>Salmonella</taxon>
    </lineage>
</organism>
<dbReference type="EMBL" id="CP001138">
    <property type="protein sequence ID" value="ACH48571.1"/>
    <property type="molecule type" value="Genomic_DNA"/>
</dbReference>
<dbReference type="RefSeq" id="WP_000956596.1">
    <property type="nucleotide sequence ID" value="NC_011149.1"/>
</dbReference>
<dbReference type="SMR" id="B5EZ11"/>
<dbReference type="KEGG" id="sea:SeAg_B4105"/>
<dbReference type="HOGENOM" id="CLU_022130_0_0_6"/>
<dbReference type="Proteomes" id="UP000008819">
    <property type="component" value="Chromosome"/>
</dbReference>
<dbReference type="GO" id="GO:0005829">
    <property type="term" value="C:cytosol"/>
    <property type="evidence" value="ECO:0007669"/>
    <property type="project" value="TreeGrafter"/>
</dbReference>
<dbReference type="CDD" id="cd01462">
    <property type="entry name" value="VWA_YIEM_type"/>
    <property type="match status" value="1"/>
</dbReference>
<dbReference type="Gene3D" id="3.40.50.410">
    <property type="entry name" value="von Willebrand factor, type A domain"/>
    <property type="match status" value="1"/>
</dbReference>
<dbReference type="HAMAP" id="MF_01626">
    <property type="entry name" value="ViaA"/>
    <property type="match status" value="1"/>
</dbReference>
<dbReference type="InterPro" id="IPR008912">
    <property type="entry name" value="Uncharacterised_CoxE"/>
</dbReference>
<dbReference type="InterPro" id="IPR023481">
    <property type="entry name" value="Uncharacterised_ViaA"/>
</dbReference>
<dbReference type="InterPro" id="IPR002035">
    <property type="entry name" value="VWF_A"/>
</dbReference>
<dbReference type="InterPro" id="IPR036465">
    <property type="entry name" value="vWFA_dom_sf"/>
</dbReference>
<dbReference type="NCBIfam" id="NF008230">
    <property type="entry name" value="PRK10997.1"/>
    <property type="match status" value="1"/>
</dbReference>
<dbReference type="PANTHER" id="PTHR36846">
    <property type="entry name" value="PROTEIN VIAA"/>
    <property type="match status" value="1"/>
</dbReference>
<dbReference type="PANTHER" id="PTHR36846:SF1">
    <property type="entry name" value="PROTEIN VIAA"/>
    <property type="match status" value="1"/>
</dbReference>
<dbReference type="Pfam" id="PF05762">
    <property type="entry name" value="VWA_CoxE"/>
    <property type="match status" value="1"/>
</dbReference>
<dbReference type="SMART" id="SM00327">
    <property type="entry name" value="VWA"/>
    <property type="match status" value="1"/>
</dbReference>
<dbReference type="SUPFAM" id="SSF53300">
    <property type="entry name" value="vWA-like"/>
    <property type="match status" value="1"/>
</dbReference>
<reference key="1">
    <citation type="journal article" date="2011" name="J. Bacteriol.">
        <title>Comparative genomics of 28 Salmonella enterica isolates: evidence for CRISPR-mediated adaptive sublineage evolution.</title>
        <authorList>
            <person name="Fricke W.F."/>
            <person name="Mammel M.K."/>
            <person name="McDermott P.F."/>
            <person name="Tartera C."/>
            <person name="White D.G."/>
            <person name="Leclerc J.E."/>
            <person name="Ravel J."/>
            <person name="Cebula T.A."/>
        </authorList>
    </citation>
    <scope>NUCLEOTIDE SEQUENCE [LARGE SCALE GENOMIC DNA]</scope>
    <source>
        <strain>SL483</strain>
    </source>
</reference>
<comment type="function">
    <text evidence="1">Component of the RavA-ViaA chaperone complex, which may act on the membrane to optimize the function of some of the respiratory chains. ViaA stimulates the ATPase activity of RavA.</text>
</comment>
<comment type="subunit">
    <text evidence="1">Homodimer. Interacts with RavA.</text>
</comment>
<comment type="subcellular location">
    <subcellularLocation>
        <location evidence="1">Cytoplasm</location>
    </subcellularLocation>
</comment>
<comment type="similarity">
    <text evidence="1">Belongs to the ViaA family.</text>
</comment>
<sequence length="483" mass="55461">MLTLDTLNTMLAVSEEGMVEEMILALLASPQLVIFFEKFPRLKNAVTADLPRWREALRSRLKDARVPPELTEEVMCYQQSQLLSTPQFIVQLPQILALLHRLHSPYTAQAKQLTESNSTFTPALHTLFLQRWRLSLVVQATTLNQQLLEEEREQLLSDVQERMTLSGQLEPTLAENDNAAGRLWDMSAGQLKRGDYQLIVKYGEFLAAQPELMQLAEQLGRSREAKSVPKKDAPMETFRTLVREPATVPEQVDGIQQGDDILRLLPPELATLGITELEYEFYRRLVEKQLLTYRLHGEAWREKVTERPVVHQDVDEQPRGPFIVCVDTSGSMGGFNEQCAKAFCLALMRVALADNRRCFIMLFSTDVVRYELSGPEGIEQAIRFLSQRFRGGTDIASCFRAIIERMQGREWFDADAVVISDFIAQRLPDDVVSKVGELQRLHQHRFHAVAMSAHGKPGIMRIFDHIWRFDTGMRSRLLRRWRR</sequence>
<protein>
    <recommendedName>
        <fullName evidence="1">Regulatory protein ViaA</fullName>
    </recommendedName>
    <alternativeName>
        <fullName evidence="1">VWA interacting with AAA+ ATPase</fullName>
    </alternativeName>
</protein>
<evidence type="ECO:0000255" key="1">
    <source>
        <dbReference type="HAMAP-Rule" id="MF_01626"/>
    </source>
</evidence>